<sequence>MSADAPVWIDEVFEDRVRYGLRGQILWEETSPFQKITIVDTEHYGRGLLLDDCWMTAERCEVCYHEYLVHPPLTTAASIARVLVIGGGDGGTVREVLRYAEVEQVDLVEIDGRVVELSQEYLGAIGTAWADPRLNVKIGDGIAFVQTAPDASYDVILVDGSDPAGPAAGLFNREFYENCRRVLKPGGVFASQAESPDSFLAVHLEMIETLSAVFAEAKPYYGWVPMYPSGWWSWLYASDTPGQFQKPQSDRLAAIEPQVEIYNRDIHQAAFAQPNFVRRGLSARQG</sequence>
<proteinExistence type="evidence at protein level"/>
<evidence type="ECO:0000255" key="1">
    <source>
        <dbReference type="HAMAP-Rule" id="MF_00198"/>
    </source>
</evidence>
<evidence type="ECO:0000269" key="2">
    <source>
    </source>
</evidence>
<evidence type="ECO:0007744" key="3">
    <source>
        <dbReference type="PDB" id="6QMM"/>
    </source>
</evidence>
<evidence type="ECO:0007829" key="4">
    <source>
        <dbReference type="PDB" id="6QMM"/>
    </source>
</evidence>
<dbReference type="EC" id="2.5.1.16" evidence="1"/>
<dbReference type="EMBL" id="CP000100">
    <property type="protein sequence ID" value="ABB56660.1"/>
    <property type="molecule type" value="Genomic_DNA"/>
</dbReference>
<dbReference type="RefSeq" id="WP_011243208.1">
    <property type="nucleotide sequence ID" value="NZ_JACJTX010000006.1"/>
</dbReference>
<dbReference type="PDB" id="6QMM">
    <property type="method" value="X-ray"/>
    <property type="resolution" value="2.18 A"/>
    <property type="chains" value="A/B=2-285"/>
</dbReference>
<dbReference type="PDBsum" id="6QMM"/>
<dbReference type="SMR" id="Q31QK9"/>
<dbReference type="STRING" id="1140.Synpcc7942_0628"/>
<dbReference type="PaxDb" id="1140-Synpcc7942_0628"/>
<dbReference type="GeneID" id="72429461"/>
<dbReference type="KEGG" id="syf:Synpcc7942_0628"/>
<dbReference type="eggNOG" id="COG0421">
    <property type="taxonomic scope" value="Bacteria"/>
</dbReference>
<dbReference type="HOGENOM" id="CLU_048199_0_0_3"/>
<dbReference type="OrthoDB" id="9793120at2"/>
<dbReference type="BioCyc" id="SYNEL:SYNPCC7942_0628-MONOMER"/>
<dbReference type="BRENDA" id="2.5.1.16">
    <property type="organism ID" value="7781"/>
</dbReference>
<dbReference type="UniPathway" id="UPA00248">
    <property type="reaction ID" value="UER00314"/>
</dbReference>
<dbReference type="Proteomes" id="UP000889800">
    <property type="component" value="Chromosome"/>
</dbReference>
<dbReference type="GO" id="GO:0005737">
    <property type="term" value="C:cytoplasm"/>
    <property type="evidence" value="ECO:0007669"/>
    <property type="project" value="UniProtKB-SubCell"/>
</dbReference>
<dbReference type="GO" id="GO:0004766">
    <property type="term" value="F:spermidine synthase activity"/>
    <property type="evidence" value="ECO:0007669"/>
    <property type="project" value="UniProtKB-UniRule"/>
</dbReference>
<dbReference type="GO" id="GO:0008295">
    <property type="term" value="P:spermidine biosynthetic process"/>
    <property type="evidence" value="ECO:0007669"/>
    <property type="project" value="UniProtKB-UniRule"/>
</dbReference>
<dbReference type="CDD" id="cd02440">
    <property type="entry name" value="AdoMet_MTases"/>
    <property type="match status" value="1"/>
</dbReference>
<dbReference type="Gene3D" id="2.30.140.10">
    <property type="entry name" value="Spermidine synthase, tetramerisation domain"/>
    <property type="match status" value="1"/>
</dbReference>
<dbReference type="Gene3D" id="3.40.50.150">
    <property type="entry name" value="Vaccinia Virus protein VP39"/>
    <property type="match status" value="1"/>
</dbReference>
<dbReference type="HAMAP" id="MF_00198">
    <property type="entry name" value="Spermidine_synth"/>
    <property type="match status" value="1"/>
</dbReference>
<dbReference type="InterPro" id="IPR030374">
    <property type="entry name" value="PABS"/>
</dbReference>
<dbReference type="InterPro" id="IPR030373">
    <property type="entry name" value="PABS_CS"/>
</dbReference>
<dbReference type="InterPro" id="IPR029063">
    <property type="entry name" value="SAM-dependent_MTases_sf"/>
</dbReference>
<dbReference type="InterPro" id="IPR001045">
    <property type="entry name" value="Spermi_synthase"/>
</dbReference>
<dbReference type="InterPro" id="IPR035246">
    <property type="entry name" value="Spermidine_synt_N"/>
</dbReference>
<dbReference type="InterPro" id="IPR037163">
    <property type="entry name" value="Spermidine_synt_N_sf"/>
</dbReference>
<dbReference type="NCBIfam" id="NF002010">
    <property type="entry name" value="PRK00811.1"/>
    <property type="match status" value="1"/>
</dbReference>
<dbReference type="PANTHER" id="PTHR11558:SF11">
    <property type="entry name" value="SPERMIDINE SYNTHASE"/>
    <property type="match status" value="1"/>
</dbReference>
<dbReference type="PANTHER" id="PTHR11558">
    <property type="entry name" value="SPERMIDINE/SPERMINE SYNTHASE"/>
    <property type="match status" value="1"/>
</dbReference>
<dbReference type="Pfam" id="PF17284">
    <property type="entry name" value="Spermine_synt_N"/>
    <property type="match status" value="1"/>
</dbReference>
<dbReference type="Pfam" id="PF01564">
    <property type="entry name" value="Spermine_synth"/>
    <property type="match status" value="1"/>
</dbReference>
<dbReference type="SUPFAM" id="SSF53335">
    <property type="entry name" value="S-adenosyl-L-methionine-dependent methyltransferases"/>
    <property type="match status" value="1"/>
</dbReference>
<dbReference type="PROSITE" id="PS01330">
    <property type="entry name" value="PABS_1"/>
    <property type="match status" value="1"/>
</dbReference>
<dbReference type="PROSITE" id="PS51006">
    <property type="entry name" value="PABS_2"/>
    <property type="match status" value="1"/>
</dbReference>
<organism>
    <name type="scientific">Synechococcus elongatus (strain ATCC 33912 / PCC 7942 / FACHB-805)</name>
    <name type="common">Anacystis nidulans R2</name>
    <dbReference type="NCBI Taxonomy" id="1140"/>
    <lineage>
        <taxon>Bacteria</taxon>
        <taxon>Bacillati</taxon>
        <taxon>Cyanobacteriota</taxon>
        <taxon>Cyanophyceae</taxon>
        <taxon>Synechococcales</taxon>
        <taxon>Synechococcaceae</taxon>
        <taxon>Synechococcus</taxon>
    </lineage>
</organism>
<comment type="function">
    <text evidence="1">Catalyzes the irreversible transfer of a propylamine group from the amino donor S-adenosylmethioninamine (decarboxy-AdoMet) to putrescine (1,4-diaminobutane) to yield spermidine.</text>
</comment>
<comment type="catalytic activity">
    <reaction evidence="1">
        <text>S-adenosyl 3-(methylsulfanyl)propylamine + putrescine = S-methyl-5'-thioadenosine + spermidine + H(+)</text>
        <dbReference type="Rhea" id="RHEA:12721"/>
        <dbReference type="ChEBI" id="CHEBI:15378"/>
        <dbReference type="ChEBI" id="CHEBI:17509"/>
        <dbReference type="ChEBI" id="CHEBI:57443"/>
        <dbReference type="ChEBI" id="CHEBI:57834"/>
        <dbReference type="ChEBI" id="CHEBI:326268"/>
        <dbReference type="EC" id="2.5.1.16"/>
    </reaction>
</comment>
<comment type="pathway">
    <text evidence="1">Amine and polyamine biosynthesis; spermidine biosynthesis; spermidine from putrescine: step 1/1.</text>
</comment>
<comment type="subunit">
    <text evidence="1 2">Homodimer or homotetramer (By similarity). Homodimer (PubMed:30877192).</text>
</comment>
<comment type="subcellular location">
    <subcellularLocation>
        <location evidence="1">Cytoplasm</location>
    </subcellularLocation>
</comment>
<comment type="similarity">
    <text evidence="1">Belongs to the spermidine/spermine synthase family.</text>
</comment>
<name>SPEE_SYNE7</name>
<keyword id="KW-0002">3D-structure</keyword>
<keyword id="KW-0963">Cytoplasm</keyword>
<keyword id="KW-0620">Polyamine biosynthesis</keyword>
<keyword id="KW-1185">Reference proteome</keyword>
<keyword id="KW-0745">Spermidine biosynthesis</keyword>
<keyword id="KW-0808">Transferase</keyword>
<protein>
    <recommendedName>
        <fullName evidence="1">Polyamine aminopropyltransferase</fullName>
    </recommendedName>
    <alternativeName>
        <fullName evidence="1">Putrescine aminopropyltransferase</fullName>
        <shortName evidence="1">PAPT</shortName>
    </alternativeName>
    <alternativeName>
        <fullName evidence="1">Spermidine synthase</fullName>
        <shortName evidence="1">SPDS</shortName>
        <shortName evidence="1">SPDSY</shortName>
        <ecNumber evidence="1">2.5.1.16</ecNumber>
    </alternativeName>
</protein>
<feature type="chain" id="PRO_1000197479" description="Polyamine aminopropyltransferase">
    <location>
        <begin position="1"/>
        <end position="286"/>
    </location>
</feature>
<feature type="domain" description="PABS" evidence="1">
    <location>
        <begin position="6"/>
        <end position="239"/>
    </location>
</feature>
<feature type="active site" description="Proton acceptor" evidence="1">
    <location>
        <position position="159"/>
    </location>
</feature>
<feature type="binding site" evidence="1 2 3">
    <location>
        <position position="34"/>
    </location>
    <ligand>
        <name>S-methyl-5'-thioadenosine</name>
        <dbReference type="ChEBI" id="CHEBI:17509"/>
    </ligand>
</feature>
<feature type="binding site" evidence="1 2 3">
    <location>
        <position position="65"/>
    </location>
    <ligand>
        <name>spermidine</name>
        <dbReference type="ChEBI" id="CHEBI:57834"/>
    </ligand>
</feature>
<feature type="binding site" evidence="1 2 3">
    <location>
        <position position="89"/>
    </location>
    <ligand>
        <name>spermidine</name>
        <dbReference type="ChEBI" id="CHEBI:57834"/>
    </ligand>
</feature>
<feature type="binding site" evidence="1 2 3">
    <location>
        <position position="109"/>
    </location>
    <ligand>
        <name>S-methyl-5'-thioadenosine</name>
        <dbReference type="ChEBI" id="CHEBI:17509"/>
    </ligand>
</feature>
<feature type="binding site" evidence="1 2 3">
    <location>
        <begin position="140"/>
        <end position="141"/>
    </location>
    <ligand>
        <name>S-methyl-5'-thioadenosine</name>
        <dbReference type="ChEBI" id="CHEBI:17509"/>
    </ligand>
</feature>
<feature type="binding site" evidence="2 3">
    <location>
        <begin position="159"/>
        <end position="162"/>
    </location>
    <ligand>
        <name>spermidine</name>
        <dbReference type="ChEBI" id="CHEBI:57834"/>
    </ligand>
</feature>
<feature type="binding site" evidence="1 2 3">
    <location>
        <position position="166"/>
    </location>
    <ligand>
        <name>S-methyl-5'-thioadenosine</name>
        <dbReference type="ChEBI" id="CHEBI:17509"/>
    </ligand>
</feature>
<feature type="strand" evidence="4">
    <location>
        <begin position="7"/>
        <end position="13"/>
    </location>
</feature>
<feature type="turn" evidence="4">
    <location>
        <begin position="14"/>
        <end position="16"/>
    </location>
</feature>
<feature type="strand" evidence="4">
    <location>
        <begin position="17"/>
        <end position="30"/>
    </location>
</feature>
<feature type="strand" evidence="4">
    <location>
        <begin position="35"/>
        <end position="41"/>
    </location>
</feature>
<feature type="turn" evidence="4">
    <location>
        <begin position="42"/>
        <end position="44"/>
    </location>
</feature>
<feature type="strand" evidence="4">
    <location>
        <begin position="45"/>
        <end position="50"/>
    </location>
</feature>
<feature type="strand" evidence="4">
    <location>
        <begin position="53"/>
        <end position="57"/>
    </location>
</feature>
<feature type="helix" evidence="4">
    <location>
        <begin position="62"/>
        <end position="75"/>
    </location>
</feature>
<feature type="strand" evidence="4">
    <location>
        <begin position="80"/>
        <end position="86"/>
    </location>
</feature>
<feature type="helix" evidence="4">
    <location>
        <begin position="91"/>
        <end position="96"/>
    </location>
</feature>
<feature type="strand" evidence="4">
    <location>
        <begin position="104"/>
        <end position="110"/>
    </location>
</feature>
<feature type="helix" evidence="4">
    <location>
        <begin position="112"/>
        <end position="121"/>
    </location>
</feature>
<feature type="turn" evidence="4">
    <location>
        <begin position="123"/>
        <end position="125"/>
    </location>
</feature>
<feature type="strand" evidence="4">
    <location>
        <begin position="134"/>
        <end position="139"/>
    </location>
</feature>
<feature type="helix" evidence="4">
    <location>
        <begin position="141"/>
        <end position="147"/>
    </location>
</feature>
<feature type="strand" evidence="4">
    <location>
        <begin position="153"/>
        <end position="159"/>
    </location>
</feature>
<feature type="strand" evidence="4">
    <location>
        <begin position="163"/>
        <end position="165"/>
    </location>
</feature>
<feature type="helix" evidence="4">
    <location>
        <begin position="168"/>
        <end position="171"/>
    </location>
</feature>
<feature type="helix" evidence="4">
    <location>
        <begin position="173"/>
        <end position="182"/>
    </location>
</feature>
<feature type="strand" evidence="4">
    <location>
        <begin position="183"/>
        <end position="194"/>
    </location>
</feature>
<feature type="turn" evidence="4">
    <location>
        <begin position="196"/>
        <end position="198"/>
    </location>
</feature>
<feature type="helix" evidence="4">
    <location>
        <begin position="200"/>
        <end position="213"/>
    </location>
</feature>
<feature type="strand" evidence="4">
    <location>
        <begin position="214"/>
        <end position="223"/>
    </location>
</feature>
<feature type="strand" evidence="4">
    <location>
        <begin position="230"/>
        <end position="240"/>
    </location>
</feature>
<feature type="helix" evidence="4">
    <location>
        <begin position="243"/>
        <end position="245"/>
    </location>
</feature>
<feature type="helix" evidence="4">
    <location>
        <begin position="249"/>
        <end position="255"/>
    </location>
</feature>
<feature type="helix" evidence="4">
    <location>
        <begin position="256"/>
        <end position="258"/>
    </location>
</feature>
<feature type="helix" evidence="4">
    <location>
        <begin position="264"/>
        <end position="269"/>
    </location>
</feature>
<feature type="helix" evidence="4">
    <location>
        <begin position="275"/>
        <end position="284"/>
    </location>
</feature>
<reference key="1">
    <citation type="submission" date="2005-08" db="EMBL/GenBank/DDBJ databases">
        <title>Complete sequence of chromosome 1 of Synechococcus elongatus PCC 7942.</title>
        <authorList>
            <consortium name="US DOE Joint Genome Institute"/>
            <person name="Copeland A."/>
            <person name="Lucas S."/>
            <person name="Lapidus A."/>
            <person name="Barry K."/>
            <person name="Detter J.C."/>
            <person name="Glavina T."/>
            <person name="Hammon N."/>
            <person name="Israni S."/>
            <person name="Pitluck S."/>
            <person name="Schmutz J."/>
            <person name="Larimer F."/>
            <person name="Land M."/>
            <person name="Kyrpides N."/>
            <person name="Lykidis A."/>
            <person name="Golden S."/>
            <person name="Richardson P."/>
        </authorList>
    </citation>
    <scope>NUCLEOTIDE SEQUENCE [LARGE SCALE GENOMIC DNA]</scope>
    <source>
        <strain>ATCC 33912 / PCC 7942 / FACHB-805</strain>
    </source>
</reference>
<reference key="2">
    <citation type="journal article" date="2019" name="Biochem. J.">
        <title>Crystal structure of dimeric Synechococcus spermidine synthase with bound polyamine substrate and product.</title>
        <authorList>
            <person name="Guedez G."/>
            <person name="Pothipongsa A."/>
            <person name="Siren S."/>
            <person name="Liljeblad A."/>
            <person name="Jantaro S."/>
            <person name="Incharoensakdi A."/>
            <person name="Salminen T.A."/>
        </authorList>
    </citation>
    <scope>X-RAY CRYSTALLOGRAPHY (2.18 ANGSTROMS) OF 2-285 IN COMPLEXES WITH PUTRESCINE; SPERMIDINE AND S-METHYL-5'-THIOADENOSINE</scope>
    <scope>HOMODIMER</scope>
</reference>
<accession>Q31QK9</accession>
<gene>
    <name evidence="1" type="primary">speE</name>
    <name type="ordered locus">Synpcc7942_0628</name>
</gene>